<proteinExistence type="inferred from homology"/>
<accession>Q63Q14</accession>
<comment type="function">
    <text evidence="1">One of the primary rRNA binding proteins. Required for association of the 30S and 50S subunits to form the 70S ribosome, for tRNA binding and peptide bond formation. It has been suggested to have peptidyltransferase activity; this is somewhat controversial. Makes several contacts with the 16S rRNA in the 70S ribosome.</text>
</comment>
<comment type="subunit">
    <text evidence="1">Part of the 50S ribosomal subunit. Forms a bridge to the 30S subunit in the 70S ribosome.</text>
</comment>
<comment type="similarity">
    <text evidence="1">Belongs to the universal ribosomal protein uL2 family.</text>
</comment>
<evidence type="ECO:0000255" key="1">
    <source>
        <dbReference type="HAMAP-Rule" id="MF_01320"/>
    </source>
</evidence>
<evidence type="ECO:0000256" key="2">
    <source>
        <dbReference type="SAM" id="MobiDB-lite"/>
    </source>
</evidence>
<evidence type="ECO:0000305" key="3"/>
<organism>
    <name type="scientific">Burkholderia pseudomallei (strain K96243)</name>
    <dbReference type="NCBI Taxonomy" id="272560"/>
    <lineage>
        <taxon>Bacteria</taxon>
        <taxon>Pseudomonadati</taxon>
        <taxon>Pseudomonadota</taxon>
        <taxon>Betaproteobacteria</taxon>
        <taxon>Burkholderiales</taxon>
        <taxon>Burkholderiaceae</taxon>
        <taxon>Burkholderia</taxon>
        <taxon>pseudomallei group</taxon>
    </lineage>
</organism>
<sequence length="275" mass="30258">MAIVKVKPTSPGRRAMVKVVNKDLHKGKPHAALLDTQSSKAGRNNNGRITTRHQGGGHKQHYRVIDFRRTKDGIPAKVERLEYDPNRSANIALVLYADGERRYIIAPKGVTVGQQLMSGSEAPIRAGNTLPIRNIPVGTTIHCIEMLPGKGAQMARSAGTSAMLLAREGLYAQVRLRSGEIRRVHIECRATIGEVGNEEHSLRQIGKAGANRWRGIRPTVRGVAMNPIDHPHGGGEGRTAAGRDPVSPWGTPTKGFRTRRNKRTTTMIVQRRHKR</sequence>
<reference key="1">
    <citation type="journal article" date="2004" name="Proc. Natl. Acad. Sci. U.S.A.">
        <title>Genomic plasticity of the causative agent of melioidosis, Burkholderia pseudomallei.</title>
        <authorList>
            <person name="Holden M.T.G."/>
            <person name="Titball R.W."/>
            <person name="Peacock S.J."/>
            <person name="Cerdeno-Tarraga A.-M."/>
            <person name="Atkins T."/>
            <person name="Crossman L.C."/>
            <person name="Pitt T."/>
            <person name="Churcher C."/>
            <person name="Mungall K.L."/>
            <person name="Bentley S.D."/>
            <person name="Sebaihia M."/>
            <person name="Thomson N.R."/>
            <person name="Bason N."/>
            <person name="Beacham I.R."/>
            <person name="Brooks K."/>
            <person name="Brown K.A."/>
            <person name="Brown N.F."/>
            <person name="Challis G.L."/>
            <person name="Cherevach I."/>
            <person name="Chillingworth T."/>
            <person name="Cronin A."/>
            <person name="Crossett B."/>
            <person name="Davis P."/>
            <person name="DeShazer D."/>
            <person name="Feltwell T."/>
            <person name="Fraser A."/>
            <person name="Hance Z."/>
            <person name="Hauser H."/>
            <person name="Holroyd S."/>
            <person name="Jagels K."/>
            <person name="Keith K.E."/>
            <person name="Maddison M."/>
            <person name="Moule S."/>
            <person name="Price C."/>
            <person name="Quail M.A."/>
            <person name="Rabbinowitsch E."/>
            <person name="Rutherford K."/>
            <person name="Sanders M."/>
            <person name="Simmonds M."/>
            <person name="Songsivilai S."/>
            <person name="Stevens K."/>
            <person name="Tumapa S."/>
            <person name="Vesaratchavest M."/>
            <person name="Whitehead S."/>
            <person name="Yeats C."/>
            <person name="Barrell B.G."/>
            <person name="Oyston P.C.F."/>
            <person name="Parkhill J."/>
        </authorList>
    </citation>
    <scope>NUCLEOTIDE SEQUENCE [LARGE SCALE GENOMIC DNA]</scope>
    <source>
        <strain>K96243</strain>
    </source>
</reference>
<protein>
    <recommendedName>
        <fullName evidence="1">Large ribosomal subunit protein uL2</fullName>
    </recommendedName>
    <alternativeName>
        <fullName evidence="3">50S ribosomal protein L2</fullName>
    </alternativeName>
</protein>
<name>RL2_BURPS</name>
<keyword id="KW-1185">Reference proteome</keyword>
<keyword id="KW-0687">Ribonucleoprotein</keyword>
<keyword id="KW-0689">Ribosomal protein</keyword>
<keyword id="KW-0694">RNA-binding</keyword>
<keyword id="KW-0699">rRNA-binding</keyword>
<gene>
    <name evidence="1" type="primary">rplB</name>
    <name type="ordered locus">BPSL3210</name>
</gene>
<dbReference type="EMBL" id="BX571965">
    <property type="protein sequence ID" value="CAH37221.1"/>
    <property type="molecule type" value="Genomic_DNA"/>
</dbReference>
<dbReference type="RefSeq" id="WP_004199274.1">
    <property type="nucleotide sequence ID" value="NZ_CP009538.1"/>
</dbReference>
<dbReference type="RefSeq" id="YP_109804.1">
    <property type="nucleotide sequence ID" value="NC_006350.1"/>
</dbReference>
<dbReference type="SMR" id="Q63Q14"/>
<dbReference type="STRING" id="272560.BPSL3210"/>
<dbReference type="GeneID" id="93061829"/>
<dbReference type="KEGG" id="bps:BPSL3210"/>
<dbReference type="PATRIC" id="fig|272560.51.peg.2028"/>
<dbReference type="eggNOG" id="COG0090">
    <property type="taxonomic scope" value="Bacteria"/>
</dbReference>
<dbReference type="Proteomes" id="UP000000605">
    <property type="component" value="Chromosome 1"/>
</dbReference>
<dbReference type="GO" id="GO:0015934">
    <property type="term" value="C:large ribosomal subunit"/>
    <property type="evidence" value="ECO:0007669"/>
    <property type="project" value="InterPro"/>
</dbReference>
<dbReference type="GO" id="GO:0019843">
    <property type="term" value="F:rRNA binding"/>
    <property type="evidence" value="ECO:0007669"/>
    <property type="project" value="UniProtKB-UniRule"/>
</dbReference>
<dbReference type="GO" id="GO:0003735">
    <property type="term" value="F:structural constituent of ribosome"/>
    <property type="evidence" value="ECO:0007669"/>
    <property type="project" value="InterPro"/>
</dbReference>
<dbReference type="GO" id="GO:0016740">
    <property type="term" value="F:transferase activity"/>
    <property type="evidence" value="ECO:0007669"/>
    <property type="project" value="InterPro"/>
</dbReference>
<dbReference type="GO" id="GO:0002181">
    <property type="term" value="P:cytoplasmic translation"/>
    <property type="evidence" value="ECO:0007669"/>
    <property type="project" value="TreeGrafter"/>
</dbReference>
<dbReference type="FunFam" id="2.30.30.30:FF:000001">
    <property type="entry name" value="50S ribosomal protein L2"/>
    <property type="match status" value="1"/>
</dbReference>
<dbReference type="FunFam" id="2.40.50.140:FF:000003">
    <property type="entry name" value="50S ribosomal protein L2"/>
    <property type="match status" value="1"/>
</dbReference>
<dbReference type="FunFam" id="4.10.950.10:FF:000001">
    <property type="entry name" value="50S ribosomal protein L2"/>
    <property type="match status" value="1"/>
</dbReference>
<dbReference type="Gene3D" id="2.30.30.30">
    <property type="match status" value="1"/>
</dbReference>
<dbReference type="Gene3D" id="2.40.50.140">
    <property type="entry name" value="Nucleic acid-binding proteins"/>
    <property type="match status" value="1"/>
</dbReference>
<dbReference type="Gene3D" id="4.10.950.10">
    <property type="entry name" value="Ribosomal protein L2, domain 3"/>
    <property type="match status" value="1"/>
</dbReference>
<dbReference type="HAMAP" id="MF_01320_B">
    <property type="entry name" value="Ribosomal_uL2_B"/>
    <property type="match status" value="1"/>
</dbReference>
<dbReference type="InterPro" id="IPR012340">
    <property type="entry name" value="NA-bd_OB-fold"/>
</dbReference>
<dbReference type="InterPro" id="IPR014722">
    <property type="entry name" value="Rib_uL2_dom2"/>
</dbReference>
<dbReference type="InterPro" id="IPR002171">
    <property type="entry name" value="Ribosomal_uL2"/>
</dbReference>
<dbReference type="InterPro" id="IPR005880">
    <property type="entry name" value="Ribosomal_uL2_bac/org-type"/>
</dbReference>
<dbReference type="InterPro" id="IPR022669">
    <property type="entry name" value="Ribosomal_uL2_C"/>
</dbReference>
<dbReference type="InterPro" id="IPR022671">
    <property type="entry name" value="Ribosomal_uL2_CS"/>
</dbReference>
<dbReference type="InterPro" id="IPR014726">
    <property type="entry name" value="Ribosomal_uL2_dom3"/>
</dbReference>
<dbReference type="InterPro" id="IPR022666">
    <property type="entry name" value="Ribosomal_uL2_RNA-bd_dom"/>
</dbReference>
<dbReference type="InterPro" id="IPR008991">
    <property type="entry name" value="Translation_prot_SH3-like_sf"/>
</dbReference>
<dbReference type="NCBIfam" id="TIGR01171">
    <property type="entry name" value="rplB_bact"/>
    <property type="match status" value="1"/>
</dbReference>
<dbReference type="PANTHER" id="PTHR13691:SF5">
    <property type="entry name" value="LARGE RIBOSOMAL SUBUNIT PROTEIN UL2M"/>
    <property type="match status" value="1"/>
</dbReference>
<dbReference type="PANTHER" id="PTHR13691">
    <property type="entry name" value="RIBOSOMAL PROTEIN L2"/>
    <property type="match status" value="1"/>
</dbReference>
<dbReference type="Pfam" id="PF00181">
    <property type="entry name" value="Ribosomal_L2"/>
    <property type="match status" value="1"/>
</dbReference>
<dbReference type="Pfam" id="PF03947">
    <property type="entry name" value="Ribosomal_L2_C"/>
    <property type="match status" value="1"/>
</dbReference>
<dbReference type="PIRSF" id="PIRSF002158">
    <property type="entry name" value="Ribosomal_L2"/>
    <property type="match status" value="1"/>
</dbReference>
<dbReference type="SMART" id="SM01383">
    <property type="entry name" value="Ribosomal_L2"/>
    <property type="match status" value="1"/>
</dbReference>
<dbReference type="SMART" id="SM01382">
    <property type="entry name" value="Ribosomal_L2_C"/>
    <property type="match status" value="1"/>
</dbReference>
<dbReference type="SUPFAM" id="SSF50249">
    <property type="entry name" value="Nucleic acid-binding proteins"/>
    <property type="match status" value="1"/>
</dbReference>
<dbReference type="SUPFAM" id="SSF50104">
    <property type="entry name" value="Translation proteins SH3-like domain"/>
    <property type="match status" value="1"/>
</dbReference>
<dbReference type="PROSITE" id="PS00467">
    <property type="entry name" value="RIBOSOMAL_L2"/>
    <property type="match status" value="1"/>
</dbReference>
<feature type="chain" id="PRO_0000237165" description="Large ribosomal subunit protein uL2">
    <location>
        <begin position="1"/>
        <end position="275"/>
    </location>
</feature>
<feature type="region of interest" description="Disordered" evidence="2">
    <location>
        <begin position="38"/>
        <end position="60"/>
    </location>
</feature>
<feature type="region of interest" description="Disordered" evidence="2">
    <location>
        <begin position="224"/>
        <end position="257"/>
    </location>
</feature>
<feature type="compositionally biased region" description="Polar residues" evidence="2">
    <location>
        <begin position="38"/>
        <end position="53"/>
    </location>
</feature>